<accession>Q6FUP6</accession>
<protein>
    <recommendedName>
        <fullName>Serine hydroxymethyltransferase, cytosolic</fullName>
        <shortName>SHMT</shortName>
        <ecNumber>2.1.2.1</ecNumber>
    </recommendedName>
    <alternativeName>
        <fullName>Glycine hydroxymethyltransferase</fullName>
    </alternativeName>
    <alternativeName>
        <fullName>Serine methylase</fullName>
    </alternativeName>
</protein>
<feature type="chain" id="PRO_0000113512" description="Serine hydroxymethyltransferase, cytosolic">
    <location>
        <begin position="1"/>
        <end position="469"/>
    </location>
</feature>
<feature type="modified residue" description="N6-(pyridoxal phosphate)lysine" evidence="1">
    <location>
        <position position="248"/>
    </location>
</feature>
<proteinExistence type="inferred from homology"/>
<gene>
    <name type="primary">SHM2</name>
    <name type="ordered locus">CAGL0F01749g</name>
</gene>
<sequence>MPYALSDKHLKMVSGHLSETDPEVEQIIKDEVDRQKHSIDLIASENFTTTSVFDALGTPLCNKYSEGYPGARYYGGNEHIDRIERLCQQRALEAFHVTPDRWGVNVQTLSGSPANLQVYQALMKPHERLMGLYLPDGGHLSHGYATENRKISAVSTYFESFPYRVNPETGIIDYDTLEKNAILYRPKILVAGTSAYCRLIDYKRMREIADKCGAYLMVDMAHISGLVAAGVIPSPFEYADIVTTTTHKSLRGPRGAMIFFRRGIRSVNQKTGKEIPYDLENPINFSVFPGHQGGPHNHTIAALATALKQAATPEFKEYQTQVLKNAKALENEFQTLGYRLVSNGTDSHMVLVSLREKGVDGARVEYVCEKINIALNKNSIPGDKSALVPGGVRIGAPAMTTRGMGEEDFHRIVRYIDQAVKFAEQTQSSLPKEANKLKDFKAKVDEIADQLAPLKKEIYDWTAEYPLAV</sequence>
<organism>
    <name type="scientific">Candida glabrata (strain ATCC 2001 / BCRC 20586 / JCM 3761 / NBRC 0622 / NRRL Y-65 / CBS 138)</name>
    <name type="common">Yeast</name>
    <name type="synonym">Nakaseomyces glabratus</name>
    <dbReference type="NCBI Taxonomy" id="284593"/>
    <lineage>
        <taxon>Eukaryota</taxon>
        <taxon>Fungi</taxon>
        <taxon>Dikarya</taxon>
        <taxon>Ascomycota</taxon>
        <taxon>Saccharomycotina</taxon>
        <taxon>Saccharomycetes</taxon>
        <taxon>Saccharomycetales</taxon>
        <taxon>Saccharomycetaceae</taxon>
        <taxon>Nakaseomyces</taxon>
    </lineage>
</organism>
<reference key="1">
    <citation type="journal article" date="2004" name="Nature">
        <title>Genome evolution in yeasts.</title>
        <authorList>
            <person name="Dujon B."/>
            <person name="Sherman D."/>
            <person name="Fischer G."/>
            <person name="Durrens P."/>
            <person name="Casaregola S."/>
            <person name="Lafontaine I."/>
            <person name="de Montigny J."/>
            <person name="Marck C."/>
            <person name="Neuveglise C."/>
            <person name="Talla E."/>
            <person name="Goffard N."/>
            <person name="Frangeul L."/>
            <person name="Aigle M."/>
            <person name="Anthouard V."/>
            <person name="Babour A."/>
            <person name="Barbe V."/>
            <person name="Barnay S."/>
            <person name="Blanchin S."/>
            <person name="Beckerich J.-M."/>
            <person name="Beyne E."/>
            <person name="Bleykasten C."/>
            <person name="Boisrame A."/>
            <person name="Boyer J."/>
            <person name="Cattolico L."/>
            <person name="Confanioleri F."/>
            <person name="de Daruvar A."/>
            <person name="Despons L."/>
            <person name="Fabre E."/>
            <person name="Fairhead C."/>
            <person name="Ferry-Dumazet H."/>
            <person name="Groppi A."/>
            <person name="Hantraye F."/>
            <person name="Hennequin C."/>
            <person name="Jauniaux N."/>
            <person name="Joyet P."/>
            <person name="Kachouri R."/>
            <person name="Kerrest A."/>
            <person name="Koszul R."/>
            <person name="Lemaire M."/>
            <person name="Lesur I."/>
            <person name="Ma L."/>
            <person name="Muller H."/>
            <person name="Nicaud J.-M."/>
            <person name="Nikolski M."/>
            <person name="Oztas S."/>
            <person name="Ozier-Kalogeropoulos O."/>
            <person name="Pellenz S."/>
            <person name="Potier S."/>
            <person name="Richard G.-F."/>
            <person name="Straub M.-L."/>
            <person name="Suleau A."/>
            <person name="Swennen D."/>
            <person name="Tekaia F."/>
            <person name="Wesolowski-Louvel M."/>
            <person name="Westhof E."/>
            <person name="Wirth B."/>
            <person name="Zeniou-Meyer M."/>
            <person name="Zivanovic Y."/>
            <person name="Bolotin-Fukuhara M."/>
            <person name="Thierry A."/>
            <person name="Bouchier C."/>
            <person name="Caudron B."/>
            <person name="Scarpelli C."/>
            <person name="Gaillardin C."/>
            <person name="Weissenbach J."/>
            <person name="Wincker P."/>
            <person name="Souciet J.-L."/>
        </authorList>
    </citation>
    <scope>NUCLEOTIDE SEQUENCE [LARGE SCALE GENOMIC DNA]</scope>
    <source>
        <strain>ATCC 2001 / BCRC 20586 / JCM 3761 / NBRC 0622 / NRRL Y-65 / CBS 138</strain>
    </source>
</reference>
<comment type="function">
    <text evidence="1">Interconversion of serine and glycine.</text>
</comment>
<comment type="catalytic activity">
    <reaction>
        <text>(6R)-5,10-methylene-5,6,7,8-tetrahydrofolate + glycine + H2O = (6S)-5,6,7,8-tetrahydrofolate + L-serine</text>
        <dbReference type="Rhea" id="RHEA:15481"/>
        <dbReference type="ChEBI" id="CHEBI:15377"/>
        <dbReference type="ChEBI" id="CHEBI:15636"/>
        <dbReference type="ChEBI" id="CHEBI:33384"/>
        <dbReference type="ChEBI" id="CHEBI:57305"/>
        <dbReference type="ChEBI" id="CHEBI:57453"/>
        <dbReference type="EC" id="2.1.2.1"/>
    </reaction>
</comment>
<comment type="cofactor">
    <cofactor evidence="1">
        <name>pyridoxal 5'-phosphate</name>
        <dbReference type="ChEBI" id="CHEBI:597326"/>
    </cofactor>
</comment>
<comment type="pathway">
    <text>One-carbon metabolism; tetrahydrofolate interconversion.</text>
</comment>
<comment type="subunit">
    <text evidence="1">Homotetramer.</text>
</comment>
<comment type="subcellular location">
    <subcellularLocation>
        <location evidence="2">Cytoplasm</location>
    </subcellularLocation>
</comment>
<comment type="similarity">
    <text evidence="2">Belongs to the SHMT family.</text>
</comment>
<evidence type="ECO:0000250" key="1"/>
<evidence type="ECO:0000305" key="2"/>
<name>GLYC_CANGA</name>
<keyword id="KW-0963">Cytoplasm</keyword>
<keyword id="KW-0554">One-carbon metabolism</keyword>
<keyword id="KW-0663">Pyridoxal phosphate</keyword>
<keyword id="KW-1185">Reference proteome</keyword>
<keyword id="KW-0808">Transferase</keyword>
<dbReference type="EC" id="2.1.2.1"/>
<dbReference type="EMBL" id="CR380952">
    <property type="protein sequence ID" value="CAG58972.1"/>
    <property type="molecule type" value="Genomic_DNA"/>
</dbReference>
<dbReference type="RefSeq" id="XP_446048.1">
    <property type="nucleotide sequence ID" value="XM_446048.1"/>
</dbReference>
<dbReference type="SMR" id="Q6FUP6"/>
<dbReference type="FunCoup" id="Q6FUP6">
    <property type="interactions" value="943"/>
</dbReference>
<dbReference type="STRING" id="284593.Q6FUP6"/>
<dbReference type="EnsemblFungi" id="CAGL0F01749g-T">
    <property type="protein sequence ID" value="CAGL0F01749g-T-p1"/>
    <property type="gene ID" value="CAGL0F01749g"/>
</dbReference>
<dbReference type="KEGG" id="cgr:2887952"/>
<dbReference type="CGD" id="CAL0131260">
    <property type="gene designation" value="SHM2"/>
</dbReference>
<dbReference type="VEuPathDB" id="FungiDB:B1J91_F01749g"/>
<dbReference type="VEuPathDB" id="FungiDB:CAGL0F01749g"/>
<dbReference type="eggNOG" id="KOG2467">
    <property type="taxonomic scope" value="Eukaryota"/>
</dbReference>
<dbReference type="HOGENOM" id="CLU_022477_0_0_1"/>
<dbReference type="InParanoid" id="Q6FUP6"/>
<dbReference type="OMA" id="CQFANVQ"/>
<dbReference type="UniPathway" id="UPA00193"/>
<dbReference type="Proteomes" id="UP000002428">
    <property type="component" value="Chromosome F"/>
</dbReference>
<dbReference type="GO" id="GO:0062040">
    <property type="term" value="C:fungal biofilm matrix"/>
    <property type="evidence" value="ECO:0000314"/>
    <property type="project" value="CGD"/>
</dbReference>
<dbReference type="GO" id="GO:0005739">
    <property type="term" value="C:mitochondrion"/>
    <property type="evidence" value="ECO:0007669"/>
    <property type="project" value="TreeGrafter"/>
</dbReference>
<dbReference type="GO" id="GO:0004372">
    <property type="term" value="F:glycine hydroxymethyltransferase activity"/>
    <property type="evidence" value="ECO:0007669"/>
    <property type="project" value="UniProtKB-EC"/>
</dbReference>
<dbReference type="GO" id="GO:0030170">
    <property type="term" value="F:pyridoxal phosphate binding"/>
    <property type="evidence" value="ECO:0007669"/>
    <property type="project" value="InterPro"/>
</dbReference>
<dbReference type="GO" id="GO:0019264">
    <property type="term" value="P:glycine biosynthetic process from serine"/>
    <property type="evidence" value="ECO:0007669"/>
    <property type="project" value="InterPro"/>
</dbReference>
<dbReference type="GO" id="GO:0035999">
    <property type="term" value="P:tetrahydrofolate interconversion"/>
    <property type="evidence" value="ECO:0007669"/>
    <property type="project" value="UniProtKB-UniPathway"/>
</dbReference>
<dbReference type="CDD" id="cd00378">
    <property type="entry name" value="SHMT"/>
    <property type="match status" value="1"/>
</dbReference>
<dbReference type="FunFam" id="3.40.640.10:FF:000097">
    <property type="entry name" value="Serine hydroxymethyltransferase"/>
    <property type="match status" value="1"/>
</dbReference>
<dbReference type="Gene3D" id="3.90.1150.10">
    <property type="entry name" value="Aspartate Aminotransferase, domain 1"/>
    <property type="match status" value="1"/>
</dbReference>
<dbReference type="Gene3D" id="3.40.640.10">
    <property type="entry name" value="Type I PLP-dependent aspartate aminotransferase-like (Major domain)"/>
    <property type="match status" value="1"/>
</dbReference>
<dbReference type="HAMAP" id="MF_00051">
    <property type="entry name" value="SHMT"/>
    <property type="match status" value="1"/>
</dbReference>
<dbReference type="InterPro" id="IPR015424">
    <property type="entry name" value="PyrdxlP-dep_Trfase"/>
</dbReference>
<dbReference type="InterPro" id="IPR015421">
    <property type="entry name" value="PyrdxlP-dep_Trfase_major"/>
</dbReference>
<dbReference type="InterPro" id="IPR015422">
    <property type="entry name" value="PyrdxlP-dep_Trfase_small"/>
</dbReference>
<dbReference type="InterPro" id="IPR001085">
    <property type="entry name" value="Ser_HO-MeTrfase"/>
</dbReference>
<dbReference type="InterPro" id="IPR049943">
    <property type="entry name" value="Ser_HO-MeTrfase-like"/>
</dbReference>
<dbReference type="InterPro" id="IPR019798">
    <property type="entry name" value="Ser_HO-MeTrfase_PLP_BS"/>
</dbReference>
<dbReference type="InterPro" id="IPR039429">
    <property type="entry name" value="SHMT-like_dom"/>
</dbReference>
<dbReference type="NCBIfam" id="NF000586">
    <property type="entry name" value="PRK00011.1"/>
    <property type="match status" value="1"/>
</dbReference>
<dbReference type="PANTHER" id="PTHR11680">
    <property type="entry name" value="SERINE HYDROXYMETHYLTRANSFERASE"/>
    <property type="match status" value="1"/>
</dbReference>
<dbReference type="PANTHER" id="PTHR11680:SF28">
    <property type="entry name" value="SERINE HYDROXYMETHYLTRANSFERASE, MITOCHONDRIAL"/>
    <property type="match status" value="1"/>
</dbReference>
<dbReference type="Pfam" id="PF00464">
    <property type="entry name" value="SHMT"/>
    <property type="match status" value="1"/>
</dbReference>
<dbReference type="PIRSF" id="PIRSF000412">
    <property type="entry name" value="SHMT"/>
    <property type="match status" value="1"/>
</dbReference>
<dbReference type="SUPFAM" id="SSF53383">
    <property type="entry name" value="PLP-dependent transferases"/>
    <property type="match status" value="1"/>
</dbReference>
<dbReference type="PROSITE" id="PS00096">
    <property type="entry name" value="SHMT"/>
    <property type="match status" value="1"/>
</dbReference>